<accession>P0C6H2</accession>
<accession>Q9E6S7</accession>
<organismHost>
    <name type="scientific">Homo sapiens</name>
    <name type="common">Human</name>
    <dbReference type="NCBI Taxonomy" id="9606"/>
</organismHost>
<organismHost>
    <name type="scientific">Pan troglodytes</name>
    <name type="common">Chimpanzee</name>
    <dbReference type="NCBI Taxonomy" id="9598"/>
</organismHost>
<name>HBEAG_HBVC0</name>
<gene>
    <name evidence="2" type="primary">C</name>
</gene>
<organism>
    <name type="scientific">Hepatitis B virus genotype C (isolate Vietnam/3270/2000)</name>
    <name type="common">HBV-C</name>
    <dbReference type="NCBI Taxonomy" id="489472"/>
    <lineage>
        <taxon>Viruses</taxon>
        <taxon>Riboviria</taxon>
        <taxon>Pararnavirae</taxon>
        <taxon>Artverviricota</taxon>
        <taxon>Revtraviricetes</taxon>
        <taxon>Blubervirales</taxon>
        <taxon>Hepadnaviridae</taxon>
        <taxon>Orthohepadnavirus</taxon>
        <taxon>Hepatitis B virus</taxon>
        <taxon>hepatitis B virus genotype C</taxon>
    </lineage>
</organism>
<comment type="function">
    <text evidence="2">May regulate immune response to the intracellular capsid in acting as a T-cell tolerogen, by having an immunoregulatory effect which prevents destruction of infected cells by cytotoxic T-cells. This immune regulation may predispose to chronicity during perinatal infections and prevent severe liver injury during adult infections.</text>
</comment>
<comment type="subunit">
    <text evidence="2">Homodimerizes.</text>
</comment>
<comment type="subcellular location">
    <subcellularLocation>
        <location evidence="2">Secreted</location>
    </subcellularLocation>
    <subcellularLocation>
        <location evidence="2">Host nucleus</location>
    </subcellularLocation>
</comment>
<comment type="alternative products">
    <event type="alternative initiation"/>
    <isoform>
        <id>P0C6H2-1</id>
        <name>External core antigen</name>
        <sequence type="displayed"/>
    </isoform>
    <isoform>
        <id>Q9E6S6-1</id>
        <name>Capsid protein</name>
        <sequence type="external"/>
    </isoform>
</comment>
<comment type="PTM">
    <text evidence="2">Phosphorylated.</text>
</comment>
<comment type="PTM">
    <text evidence="2">Cleaved by host furin.</text>
</comment>
<comment type="similarity">
    <text evidence="2">Belongs to the orthohepadnavirus precore antigen family.</text>
</comment>
<dbReference type="EMBL" id="AF241410">
    <property type="protein sequence ID" value="AAG17594.1"/>
    <property type="molecule type" value="Genomic_DNA"/>
</dbReference>
<dbReference type="PDB" id="3OX8">
    <property type="method" value="X-ray"/>
    <property type="resolution" value="2.16 A"/>
    <property type="chains" value="C/F=47-55"/>
</dbReference>
<dbReference type="PDB" id="3OXR">
    <property type="method" value="X-ray"/>
    <property type="resolution" value="1.70 A"/>
    <property type="chains" value="C=47-55"/>
</dbReference>
<dbReference type="PDB" id="3OXS">
    <property type="method" value="X-ray"/>
    <property type="resolution" value="1.75 A"/>
    <property type="chains" value="C=47-55"/>
</dbReference>
<dbReference type="PDBsum" id="3OX8"/>
<dbReference type="PDBsum" id="3OXR"/>
<dbReference type="PDBsum" id="3OXS"/>
<dbReference type="SMR" id="P0C6H2"/>
<dbReference type="EvolutionaryTrace" id="P0C6H2"/>
<dbReference type="Proteomes" id="UP000007920">
    <property type="component" value="Genome"/>
</dbReference>
<dbReference type="GO" id="GO:0005576">
    <property type="term" value="C:extracellular region"/>
    <property type="evidence" value="ECO:0007669"/>
    <property type="project" value="UniProtKB-SubCell"/>
</dbReference>
<dbReference type="GO" id="GO:0043657">
    <property type="term" value="C:host cell"/>
    <property type="evidence" value="ECO:0007669"/>
    <property type="project" value="GOC"/>
</dbReference>
<dbReference type="GO" id="GO:0030430">
    <property type="term" value="C:host cell cytoplasm"/>
    <property type="evidence" value="ECO:0007669"/>
    <property type="project" value="UniProtKB-UniRule"/>
</dbReference>
<dbReference type="GO" id="GO:0042025">
    <property type="term" value="C:host cell nucleus"/>
    <property type="evidence" value="ECO:0007669"/>
    <property type="project" value="UniProtKB-SubCell"/>
</dbReference>
<dbReference type="GO" id="GO:0039619">
    <property type="term" value="C:T=4 icosahedral viral capsid"/>
    <property type="evidence" value="ECO:0007669"/>
    <property type="project" value="UniProtKB-UniRule"/>
</dbReference>
<dbReference type="GO" id="GO:0003677">
    <property type="term" value="F:DNA binding"/>
    <property type="evidence" value="ECO:0007669"/>
    <property type="project" value="UniProtKB-UniRule"/>
</dbReference>
<dbReference type="GO" id="GO:0003723">
    <property type="term" value="F:RNA binding"/>
    <property type="evidence" value="ECO:0007669"/>
    <property type="project" value="UniProtKB-UniRule"/>
</dbReference>
<dbReference type="GO" id="GO:0005198">
    <property type="term" value="F:structural molecule activity"/>
    <property type="evidence" value="ECO:0007669"/>
    <property type="project" value="UniProtKB-UniRule"/>
</dbReference>
<dbReference type="GO" id="GO:0075521">
    <property type="term" value="P:microtubule-dependent intracellular transport of viral material towards nucleus"/>
    <property type="evidence" value="ECO:0007669"/>
    <property type="project" value="UniProtKB-UniRule"/>
</dbReference>
<dbReference type="GO" id="GO:0046718">
    <property type="term" value="P:symbiont entry into host cell"/>
    <property type="evidence" value="ECO:0007669"/>
    <property type="project" value="UniProtKB-UniRule"/>
</dbReference>
<dbReference type="GO" id="GO:0075732">
    <property type="term" value="P:viral penetration into host nucleus"/>
    <property type="evidence" value="ECO:0007669"/>
    <property type="project" value="UniProtKB-UniRule"/>
</dbReference>
<dbReference type="FunFam" id="1.10.4090.10:FF:000001">
    <property type="entry name" value="Capsid protein"/>
    <property type="match status" value="1"/>
</dbReference>
<dbReference type="Gene3D" id="1.10.4090.10">
    <property type="entry name" value="Viral capsid, core domain supefamily, Hepatitis B virus"/>
    <property type="match status" value="1"/>
</dbReference>
<dbReference type="HAMAP" id="MF_04076">
    <property type="entry name" value="HBV_HBEAG"/>
    <property type="match status" value="1"/>
</dbReference>
<dbReference type="InterPro" id="IPR013195">
    <property type="entry name" value="Hepatitis_B_virus_capsid_N"/>
</dbReference>
<dbReference type="InterPro" id="IPR002006">
    <property type="entry name" value="Hepatitis_core"/>
</dbReference>
<dbReference type="InterPro" id="IPR036459">
    <property type="entry name" value="Viral_capsid_core_dom_sf_HBV"/>
</dbReference>
<dbReference type="Pfam" id="PF08290">
    <property type="entry name" value="Hep_core_N"/>
    <property type="match status" value="1"/>
</dbReference>
<dbReference type="Pfam" id="PF00906">
    <property type="entry name" value="Hepatitis_core"/>
    <property type="match status" value="3"/>
</dbReference>
<dbReference type="SUPFAM" id="SSF47852">
    <property type="entry name" value="Hepatitis B viral capsid (hbcag)"/>
    <property type="match status" value="1"/>
</dbReference>
<feature type="signal peptide" evidence="2">
    <location>
        <begin position="1"/>
        <end position="19"/>
    </location>
</feature>
<feature type="chain" id="PRO_0000324712" description="External core antigen" evidence="2">
    <location>
        <begin position="20"/>
        <end position="212"/>
    </location>
</feature>
<feature type="propeptide" id="PRO_0000324713" evidence="1">
    <location>
        <begin position="184"/>
        <end position="212"/>
    </location>
</feature>
<feature type="repeat" description="1; half-length">
    <location>
        <begin position="184"/>
        <end position="190"/>
    </location>
</feature>
<feature type="repeat" description="2">
    <location>
        <begin position="191"/>
        <end position="198"/>
    </location>
</feature>
<feature type="repeat" description="3">
    <location>
        <begin position="199"/>
        <end position="206"/>
    </location>
</feature>
<feature type="region of interest" description="HBEAG" evidence="2">
    <location>
        <begin position="25"/>
        <end position="27"/>
    </location>
</feature>
<feature type="region of interest" description="Disordered" evidence="3">
    <location>
        <begin position="165"/>
        <end position="212"/>
    </location>
</feature>
<feature type="region of interest" description="3 X 8 AA repeats of S-P-R-R-R-R-S-Q">
    <location>
        <begin position="184"/>
        <end position="206"/>
    </location>
</feature>
<feature type="compositionally biased region" description="Basic residues" evidence="3">
    <location>
        <begin position="178"/>
        <end position="205"/>
    </location>
</feature>
<feature type="site" description="Cleavage; by host" evidence="2">
    <location>
        <begin position="183"/>
        <end position="184"/>
    </location>
</feature>
<feature type="disulfide bond" description="Interchain" evidence="2">
    <location>
        <position position="77"/>
    </location>
</feature>
<feature type="disulfide bond" description="Interchain" evidence="2">
    <location>
        <position position="90"/>
    </location>
</feature>
<sequence length="212" mass="24315">MQLFHLCLIISCSCPTVQASKLCLGWLWGMDIDPYKEFGASVELLSFLPSDFFPSIRDLLDTASALYREALESPEHCSPHHTALRQAILCWGELMNLATWVGSNLEDPASRELVVSYVNVNMGLKIRQLLWFHVSCLTFGRETVLEYLVSFGVWIRTPPAYRPPNAPILSTLPETTVVRRRGRSPRRRTPSPRRRRSQSPRRRRSQSRESQC</sequence>
<keyword id="KW-0002">3D-structure</keyword>
<keyword id="KW-0024">Alternative initiation</keyword>
<keyword id="KW-1015">Disulfide bond</keyword>
<keyword id="KW-1048">Host nucleus</keyword>
<keyword id="KW-0945">Host-virus interaction</keyword>
<keyword id="KW-0677">Repeat</keyword>
<keyword id="KW-0964">Secreted</keyword>
<keyword id="KW-0732">Signal</keyword>
<keyword id="KW-0899">Viral immunoevasion</keyword>
<protein>
    <recommendedName>
        <fullName evidence="2">External core antigen</fullName>
    </recommendedName>
    <alternativeName>
        <fullName evidence="2">HBeAg</fullName>
    </alternativeName>
    <alternativeName>
        <fullName evidence="2">Precore protein</fullName>
    </alternativeName>
    <alternativeName>
        <fullName evidence="2">p25</fullName>
    </alternativeName>
</protein>
<evidence type="ECO:0000250" key="1"/>
<evidence type="ECO:0000255" key="2">
    <source>
        <dbReference type="HAMAP-Rule" id="MF_04076"/>
    </source>
</evidence>
<evidence type="ECO:0000256" key="3">
    <source>
        <dbReference type="SAM" id="MobiDB-lite"/>
    </source>
</evidence>
<reference key="1">
    <citation type="journal article" date="2000" name="J. Gen. Virol.">
        <title>An aberrant genotype revealed in recombinant hepatitis B virus strains from Vietnam.</title>
        <authorList>
            <person name="Hannoun C."/>
            <person name="Norder H."/>
            <person name="Lindh M."/>
        </authorList>
    </citation>
    <scope>NUCLEOTIDE SEQUENCE [GENOMIC DNA]</scope>
</reference>
<proteinExistence type="evidence at protein level"/>